<keyword id="KW-0932">Cytokinin signaling pathway</keyword>
<keyword id="KW-0539">Nucleus</keyword>
<keyword id="KW-0597">Phosphoprotein</keyword>
<keyword id="KW-1185">Reference proteome</keyword>
<keyword id="KW-0804">Transcription</keyword>
<keyword id="KW-0805">Transcription regulation</keyword>
<keyword id="KW-0902">Two-component regulatory system</keyword>
<comment type="function">
    <text evidence="3 4">Functions as a response regulator involved in His-to-Asp phosphorelay signal transduction system. Phosphorylation of the Asp residue in the receiver domain activates the ability of the protein to promote the transcription of target genes. Type-A response regulators seem to act as negative regulators of the cytokinin signaling.</text>
</comment>
<comment type="interaction">
    <interactant intactId="EBI-1770344">
        <id>Q9ZWS9</id>
    </interactant>
    <interactant intactId="EBI-25523272">
        <id>A0A384LLE4</id>
        <label>At1g76870</label>
    </interactant>
    <organismsDiffer>false</organismsDiffer>
    <experiments>3</experiments>
</comment>
<comment type="interaction">
    <interactant intactId="EBI-1770344">
        <id>Q9ZWS9</id>
    </interactant>
    <interactant intactId="EBI-4426144">
        <id>Q9C9L2</id>
        <label>TCP15</label>
    </interactant>
    <organismsDiffer>false</organismsDiffer>
    <experiments>3</experiments>
</comment>
<comment type="subcellular location">
    <subcellularLocation>
        <location evidence="6">Nucleus</location>
    </subcellularLocation>
</comment>
<comment type="tissue specificity">
    <text evidence="4">Predominantly expressed in roots.</text>
</comment>
<comment type="induction">
    <text evidence="5">By cytokinin (zeatin) and nitrate.</text>
</comment>
<comment type="PTM">
    <text>Two-component system major event consists of a His-to-Asp phosphorelay between a sensor histidine kinase (HK) and a response regulator (RR). In plants, the His-to-Asp phosphorelay involves an additional intermediate named Histidine-containing phosphotransfer protein (HPt). This multistep phosphorelay consists of a His-Asp-His-Asp sequential transfer of a phosphate group between first a His and an Asp of the HK protein, followed by the transfer to a conserved His of the HPt protein and finally the transfer to an Asp in the receiver domain of the RR protein.</text>
</comment>
<comment type="similarity">
    <text evidence="6">Belongs to the ARR family. Type-A subfamily.</text>
</comment>
<sequence>MAKDGGVSCLRRSEMIGIGIGELESPPLDSDQVHVLAVDDSLVDRIVIERLLRITSCKVTAVDSGWRALEFLGLDDDKAAVEFDRLKVDLIITDYCMPGMTGYELLKKIKESTSFKEVPVVIMSSENVMTRIDRCLEEGAEDFLLKPVKLADVKRLRSYLTRDVKVAAEGNKRKLTTPPPPPPLSATSSMESSDSTVESPLSMVDDEDSLTMSPESATSLVDSPMRSPGLA</sequence>
<protein>
    <recommendedName>
        <fullName>Two-component response regulator ARR3</fullName>
    </recommendedName>
</protein>
<feature type="chain" id="PRO_0000081424" description="Two-component response regulator ARR3">
    <location>
        <begin position="1"/>
        <end position="231"/>
    </location>
</feature>
<feature type="domain" description="Response regulatory" evidence="1">
    <location>
        <begin position="34"/>
        <end position="161"/>
    </location>
</feature>
<feature type="region of interest" description="Disordered" evidence="2">
    <location>
        <begin position="170"/>
        <end position="231"/>
    </location>
</feature>
<feature type="compositionally biased region" description="Low complexity" evidence="2">
    <location>
        <begin position="185"/>
        <end position="199"/>
    </location>
</feature>
<feature type="compositionally biased region" description="Polar residues" evidence="2">
    <location>
        <begin position="210"/>
        <end position="221"/>
    </location>
</feature>
<feature type="modified residue" description="4-aspartylphosphate" evidence="1">
    <location>
        <position position="94"/>
    </location>
</feature>
<reference key="1">
    <citation type="journal article" date="1998" name="Proc. Natl. Acad. Sci. U.S.A.">
        <title>Response regulators implicated in His-to-Asp phosphotransfer signaling in Arabidopsis.</title>
        <authorList>
            <person name="Imamura A."/>
            <person name="Hanaki N."/>
            <person name="Umeda H."/>
            <person name="Nakamura A."/>
            <person name="Suzuki T."/>
            <person name="Ueguchi C."/>
            <person name="Mizuno T."/>
        </authorList>
    </citation>
    <scope>NUCLEOTIDE SEQUENCE [MRNA]</scope>
    <scope>FUNCTION</scope>
    <scope>TISSUE SPECIFICITY</scope>
    <source>
        <strain>cv. Columbia</strain>
    </source>
</reference>
<reference key="2">
    <citation type="journal article" date="2000" name="Nature">
        <title>Sequence and analysis of chromosome 1 of the plant Arabidopsis thaliana.</title>
        <authorList>
            <person name="Theologis A."/>
            <person name="Ecker J.R."/>
            <person name="Palm C.J."/>
            <person name="Federspiel N.A."/>
            <person name="Kaul S."/>
            <person name="White O."/>
            <person name="Alonso J."/>
            <person name="Altafi H."/>
            <person name="Araujo R."/>
            <person name="Bowman C.L."/>
            <person name="Brooks S.Y."/>
            <person name="Buehler E."/>
            <person name="Chan A."/>
            <person name="Chao Q."/>
            <person name="Chen H."/>
            <person name="Cheuk R.F."/>
            <person name="Chin C.W."/>
            <person name="Chung M.K."/>
            <person name="Conn L."/>
            <person name="Conway A.B."/>
            <person name="Conway A.R."/>
            <person name="Creasy T.H."/>
            <person name="Dewar K."/>
            <person name="Dunn P."/>
            <person name="Etgu P."/>
            <person name="Feldblyum T.V."/>
            <person name="Feng J.-D."/>
            <person name="Fong B."/>
            <person name="Fujii C.Y."/>
            <person name="Gill J.E."/>
            <person name="Goldsmith A.D."/>
            <person name="Haas B."/>
            <person name="Hansen N.F."/>
            <person name="Hughes B."/>
            <person name="Huizar L."/>
            <person name="Hunter J.L."/>
            <person name="Jenkins J."/>
            <person name="Johnson-Hopson C."/>
            <person name="Khan S."/>
            <person name="Khaykin E."/>
            <person name="Kim C.J."/>
            <person name="Koo H.L."/>
            <person name="Kremenetskaia I."/>
            <person name="Kurtz D.B."/>
            <person name="Kwan A."/>
            <person name="Lam B."/>
            <person name="Langin-Hooper S."/>
            <person name="Lee A."/>
            <person name="Lee J.M."/>
            <person name="Lenz C.A."/>
            <person name="Li J.H."/>
            <person name="Li Y.-P."/>
            <person name="Lin X."/>
            <person name="Liu S.X."/>
            <person name="Liu Z.A."/>
            <person name="Luros J.S."/>
            <person name="Maiti R."/>
            <person name="Marziali A."/>
            <person name="Militscher J."/>
            <person name="Miranda M."/>
            <person name="Nguyen M."/>
            <person name="Nierman W.C."/>
            <person name="Osborne B.I."/>
            <person name="Pai G."/>
            <person name="Peterson J."/>
            <person name="Pham P.K."/>
            <person name="Rizzo M."/>
            <person name="Rooney T."/>
            <person name="Rowley D."/>
            <person name="Sakano H."/>
            <person name="Salzberg S.L."/>
            <person name="Schwartz J.R."/>
            <person name="Shinn P."/>
            <person name="Southwick A.M."/>
            <person name="Sun H."/>
            <person name="Tallon L.J."/>
            <person name="Tambunga G."/>
            <person name="Toriumi M.J."/>
            <person name="Town C.D."/>
            <person name="Utterback T."/>
            <person name="Van Aken S."/>
            <person name="Vaysberg M."/>
            <person name="Vysotskaia V.S."/>
            <person name="Walker M."/>
            <person name="Wu D."/>
            <person name="Yu G."/>
            <person name="Fraser C.M."/>
            <person name="Venter J.C."/>
            <person name="Davis R.W."/>
        </authorList>
    </citation>
    <scope>NUCLEOTIDE SEQUENCE [LARGE SCALE GENOMIC DNA]</scope>
    <source>
        <strain>cv. Columbia</strain>
    </source>
</reference>
<reference key="3">
    <citation type="journal article" date="2017" name="Plant J.">
        <title>Araport11: a complete reannotation of the Arabidopsis thaliana reference genome.</title>
        <authorList>
            <person name="Cheng C.Y."/>
            <person name="Krishnakumar V."/>
            <person name="Chan A.P."/>
            <person name="Thibaud-Nissen F."/>
            <person name="Schobel S."/>
            <person name="Town C.D."/>
        </authorList>
    </citation>
    <scope>GENOME REANNOTATION</scope>
    <source>
        <strain>cv. Columbia</strain>
    </source>
</reference>
<reference key="4">
    <citation type="journal article" date="1998" name="FEBS Lett.">
        <title>Expression of Arabidopsis response regulator homologs is induced by cytokinins and nitrate.</title>
        <authorList>
            <person name="Taniguchi M."/>
            <person name="Kiba T."/>
            <person name="Sakakibara H."/>
            <person name="Ueguchi C."/>
            <person name="Mizuno T."/>
            <person name="Sugiyama T."/>
        </authorList>
    </citation>
    <scope>INDUCTION</scope>
</reference>
<reference key="5">
    <citation type="journal article" date="2004" name="Plant Cell">
        <title>Type-A Arabidopsis response regulators are partially redundant negative regulators of cytokinin signaling.</title>
        <authorList>
            <person name="To J.P.C."/>
            <person name="Haberer G."/>
            <person name="Ferreira F.J."/>
            <person name="Deruere J."/>
            <person name="Mason M.G."/>
            <person name="Schaller G.E."/>
            <person name="Alonso J.M."/>
            <person name="Ecker J.R."/>
            <person name="Kieber J.J."/>
        </authorList>
    </citation>
    <scope>FUNCTION</scope>
</reference>
<dbReference type="EMBL" id="AB008486">
    <property type="protein sequence ID" value="BAA34725.1"/>
    <property type="molecule type" value="mRNA"/>
</dbReference>
<dbReference type="EMBL" id="AC007258">
    <property type="protein sequence ID" value="AAD39333.1"/>
    <property type="molecule type" value="Genomic_DNA"/>
</dbReference>
<dbReference type="EMBL" id="CP002684">
    <property type="protein sequence ID" value="AEE33642.1"/>
    <property type="molecule type" value="Genomic_DNA"/>
</dbReference>
<dbReference type="PIR" id="T50853">
    <property type="entry name" value="T50853"/>
</dbReference>
<dbReference type="RefSeq" id="NP_176202.1">
    <property type="nucleotide sequence ID" value="NM_104686.3"/>
</dbReference>
<dbReference type="SMR" id="Q9ZWS9"/>
<dbReference type="BioGRID" id="27513">
    <property type="interactions" value="16"/>
</dbReference>
<dbReference type="FunCoup" id="Q9ZWS9">
    <property type="interactions" value="315"/>
</dbReference>
<dbReference type="IntAct" id="Q9ZWS9">
    <property type="interactions" value="16"/>
</dbReference>
<dbReference type="STRING" id="3702.Q9ZWS9"/>
<dbReference type="PaxDb" id="3702-AT1G59940.1"/>
<dbReference type="ProteomicsDB" id="246900"/>
<dbReference type="EnsemblPlants" id="AT1G59940.1">
    <property type="protein sequence ID" value="AT1G59940.1"/>
    <property type="gene ID" value="AT1G59940"/>
</dbReference>
<dbReference type="GeneID" id="842288"/>
<dbReference type="Gramene" id="AT1G59940.1">
    <property type="protein sequence ID" value="AT1G59940.1"/>
    <property type="gene ID" value="AT1G59940"/>
</dbReference>
<dbReference type="KEGG" id="ath:AT1G59940"/>
<dbReference type="Araport" id="AT1G59940"/>
<dbReference type="TAIR" id="AT1G59940">
    <property type="gene designation" value="ARR3"/>
</dbReference>
<dbReference type="eggNOG" id="KOG1601">
    <property type="taxonomic scope" value="Eukaryota"/>
</dbReference>
<dbReference type="HOGENOM" id="CLU_000445_69_5_1"/>
<dbReference type="InParanoid" id="Q9ZWS9"/>
<dbReference type="PhylomeDB" id="Q9ZWS9"/>
<dbReference type="PRO" id="PR:Q9ZWS9"/>
<dbReference type="Proteomes" id="UP000006548">
    <property type="component" value="Chromosome 1"/>
</dbReference>
<dbReference type="ExpressionAtlas" id="Q9ZWS9">
    <property type="expression patterns" value="baseline and differential"/>
</dbReference>
<dbReference type="GO" id="GO:0005737">
    <property type="term" value="C:cytoplasm"/>
    <property type="evidence" value="ECO:0000314"/>
    <property type="project" value="TAIR"/>
</dbReference>
<dbReference type="GO" id="GO:0005634">
    <property type="term" value="C:nucleus"/>
    <property type="evidence" value="ECO:0000314"/>
    <property type="project" value="TAIR"/>
</dbReference>
<dbReference type="GO" id="GO:0000156">
    <property type="term" value="F:phosphorelay response regulator activity"/>
    <property type="evidence" value="ECO:0000314"/>
    <property type="project" value="TAIR"/>
</dbReference>
<dbReference type="GO" id="GO:0007623">
    <property type="term" value="P:circadian rhythm"/>
    <property type="evidence" value="ECO:0000315"/>
    <property type="project" value="TAIR"/>
</dbReference>
<dbReference type="GO" id="GO:0009736">
    <property type="term" value="P:cytokinin-activated signaling pathway"/>
    <property type="evidence" value="ECO:0000304"/>
    <property type="project" value="TAIR"/>
</dbReference>
<dbReference type="GO" id="GO:0000160">
    <property type="term" value="P:phosphorelay signal transduction system"/>
    <property type="evidence" value="ECO:0000314"/>
    <property type="project" value="TAIR"/>
</dbReference>
<dbReference type="GO" id="GO:0010161">
    <property type="term" value="P:red light signaling pathway"/>
    <property type="evidence" value="ECO:0000315"/>
    <property type="project" value="TAIR"/>
</dbReference>
<dbReference type="GO" id="GO:0006355">
    <property type="term" value="P:regulation of DNA-templated transcription"/>
    <property type="evidence" value="ECO:0000304"/>
    <property type="project" value="TAIR"/>
</dbReference>
<dbReference type="GO" id="GO:0009735">
    <property type="term" value="P:response to cytokinin"/>
    <property type="evidence" value="ECO:0000270"/>
    <property type="project" value="TAIR"/>
</dbReference>
<dbReference type="GO" id="GO:0010114">
    <property type="term" value="P:response to red light"/>
    <property type="evidence" value="ECO:0000315"/>
    <property type="project" value="TAIR"/>
</dbReference>
<dbReference type="CDD" id="cd17581">
    <property type="entry name" value="REC_typeA_ARR"/>
    <property type="match status" value="1"/>
</dbReference>
<dbReference type="FunFam" id="3.40.50.2300:FF:000184">
    <property type="entry name" value="Response regulator 3"/>
    <property type="match status" value="1"/>
</dbReference>
<dbReference type="Gene3D" id="3.40.50.2300">
    <property type="match status" value="1"/>
</dbReference>
<dbReference type="InterPro" id="IPR045279">
    <property type="entry name" value="ARR-like"/>
</dbReference>
<dbReference type="InterPro" id="IPR011006">
    <property type="entry name" value="CheY-like_superfamily"/>
</dbReference>
<dbReference type="InterPro" id="IPR001789">
    <property type="entry name" value="Sig_transdc_resp-reg_receiver"/>
</dbReference>
<dbReference type="PANTHER" id="PTHR43874">
    <property type="entry name" value="TWO-COMPONENT RESPONSE REGULATOR"/>
    <property type="match status" value="1"/>
</dbReference>
<dbReference type="PANTHER" id="PTHR43874:SF50">
    <property type="entry name" value="TWO-COMPONENT RESPONSE REGULATOR ARR3-RELATED"/>
    <property type="match status" value="1"/>
</dbReference>
<dbReference type="Pfam" id="PF00072">
    <property type="entry name" value="Response_reg"/>
    <property type="match status" value="1"/>
</dbReference>
<dbReference type="SMART" id="SM00448">
    <property type="entry name" value="REC"/>
    <property type="match status" value="1"/>
</dbReference>
<dbReference type="SUPFAM" id="SSF52172">
    <property type="entry name" value="CheY-like"/>
    <property type="match status" value="1"/>
</dbReference>
<dbReference type="PROSITE" id="PS50110">
    <property type="entry name" value="RESPONSE_REGULATORY"/>
    <property type="match status" value="1"/>
</dbReference>
<evidence type="ECO:0000255" key="1">
    <source>
        <dbReference type="PROSITE-ProRule" id="PRU00169"/>
    </source>
</evidence>
<evidence type="ECO:0000256" key="2">
    <source>
        <dbReference type="SAM" id="MobiDB-lite"/>
    </source>
</evidence>
<evidence type="ECO:0000269" key="3">
    <source>
    </source>
</evidence>
<evidence type="ECO:0000269" key="4">
    <source>
    </source>
</evidence>
<evidence type="ECO:0000269" key="5">
    <source>
    </source>
</evidence>
<evidence type="ECO:0000305" key="6"/>
<organism>
    <name type="scientific">Arabidopsis thaliana</name>
    <name type="common">Mouse-ear cress</name>
    <dbReference type="NCBI Taxonomy" id="3702"/>
    <lineage>
        <taxon>Eukaryota</taxon>
        <taxon>Viridiplantae</taxon>
        <taxon>Streptophyta</taxon>
        <taxon>Embryophyta</taxon>
        <taxon>Tracheophyta</taxon>
        <taxon>Spermatophyta</taxon>
        <taxon>Magnoliopsida</taxon>
        <taxon>eudicotyledons</taxon>
        <taxon>Gunneridae</taxon>
        <taxon>Pentapetalae</taxon>
        <taxon>rosids</taxon>
        <taxon>malvids</taxon>
        <taxon>Brassicales</taxon>
        <taxon>Brassicaceae</taxon>
        <taxon>Camelineae</taxon>
        <taxon>Arabidopsis</taxon>
    </lineage>
</organism>
<name>ARR3_ARATH</name>
<proteinExistence type="evidence at protein level"/>
<accession>Q9ZWS9</accession>
<gene>
    <name type="primary">ARR3</name>
    <name type="ordered locus">At1g59940</name>
    <name type="ORF">F23H11.25</name>
</gene>